<evidence type="ECO:0000255" key="1">
    <source>
        <dbReference type="HAMAP-Rule" id="MF_00054"/>
    </source>
</evidence>
<keyword id="KW-0963">Cytoplasm</keyword>
<keyword id="KW-0251">Elongation factor</keyword>
<keyword id="KW-0342">GTP-binding</keyword>
<keyword id="KW-0547">Nucleotide-binding</keyword>
<keyword id="KW-0648">Protein biosynthesis</keyword>
<gene>
    <name evidence="1" type="primary">fusA</name>
    <name type="ordered locus">Athe_0809</name>
</gene>
<sequence length="691" mass="77220">MPRQFPLEKTRNIGIMAHIDAGKTTTTERILFYTGKVHKMGEVHEGTATMDWMEQEQERGITITSAATTCEWKGHRINIIDTPGHVDFTVEVERSLRVLDGAIAVFCAKGGVEPQSETVWRQADKYRVPRIAYVNKMDIMGANFFNVIEMMKERLGANPVAIQVPIGKEDTFRGIVDLLTMKAIIYVDDLGKVSQETDIPEEVKDIAEEYRIKLLEAVAETDEEIMVKYLEGEEITVEELKAAIRKATINMQMTPVLCGSSYRNKGVQPLLDAVVDYLPSPVDIAAVKGFSPDTGEEIERKTSEDEPFCALAFKIMSDPYVGKLTFLRVYSGVLHAGSYVYNSTKNKKERVGRLLHMHANHREDVDAVYAGDICAAIGLSNTTTGDTLCDENHPIVLESMEFPEPVIQVAIEPKTKADQEKMGIALQRLAEEDPTFKVSTNHETGQTLIAGMGELHLEIIVDRMRREFKVEVNVGKPQVAYKETIKKSVKVEGKYIRQSGGRGQYGHVWLELEPLERGAGYEFVNKIVGGVIPKEFIPSVDAGVQEAMQSGVLAGYPVVDVRVTLFDGSYHEVDSSDMAFRIAAAQAFREGMKKADPVLLEPIMKVEVVVPEEYMGDVMGDINSRRGRIEGMELRGNAQVIRAYVPLAEMFGYATDLRSKTQGRGTYTMQFDHYEEVPKNIADKILEMKNK</sequence>
<organism>
    <name type="scientific">Caldicellulosiruptor bescii (strain ATCC BAA-1888 / DSM 6725 / KCTC 15123 / Z-1320)</name>
    <name type="common">Anaerocellum thermophilum</name>
    <dbReference type="NCBI Taxonomy" id="521460"/>
    <lineage>
        <taxon>Bacteria</taxon>
        <taxon>Bacillati</taxon>
        <taxon>Bacillota</taxon>
        <taxon>Bacillota incertae sedis</taxon>
        <taxon>Caldicellulosiruptorales</taxon>
        <taxon>Caldicellulosiruptoraceae</taxon>
        <taxon>Caldicellulosiruptor</taxon>
    </lineage>
</organism>
<proteinExistence type="inferred from homology"/>
<feature type="chain" id="PRO_1000201428" description="Elongation factor G">
    <location>
        <begin position="1"/>
        <end position="691"/>
    </location>
</feature>
<feature type="domain" description="tr-type G">
    <location>
        <begin position="8"/>
        <end position="282"/>
    </location>
</feature>
<feature type="binding site" evidence="1">
    <location>
        <begin position="17"/>
        <end position="24"/>
    </location>
    <ligand>
        <name>GTP</name>
        <dbReference type="ChEBI" id="CHEBI:37565"/>
    </ligand>
</feature>
<feature type="binding site" evidence="1">
    <location>
        <begin position="81"/>
        <end position="85"/>
    </location>
    <ligand>
        <name>GTP</name>
        <dbReference type="ChEBI" id="CHEBI:37565"/>
    </ligand>
</feature>
<feature type="binding site" evidence="1">
    <location>
        <begin position="135"/>
        <end position="138"/>
    </location>
    <ligand>
        <name>GTP</name>
        <dbReference type="ChEBI" id="CHEBI:37565"/>
    </ligand>
</feature>
<name>EFG_CALBD</name>
<protein>
    <recommendedName>
        <fullName evidence="1">Elongation factor G</fullName>
        <shortName evidence="1">EF-G</shortName>
    </recommendedName>
</protein>
<dbReference type="EMBL" id="CP001393">
    <property type="protein sequence ID" value="ACM59924.1"/>
    <property type="molecule type" value="Genomic_DNA"/>
</dbReference>
<dbReference type="RefSeq" id="WP_015907356.1">
    <property type="nucleotide sequence ID" value="NC_012034.1"/>
</dbReference>
<dbReference type="SMR" id="B9MQH0"/>
<dbReference type="STRING" id="521460.Athe_0809"/>
<dbReference type="GeneID" id="31772164"/>
<dbReference type="KEGG" id="ate:Athe_0809"/>
<dbReference type="eggNOG" id="COG0480">
    <property type="taxonomic scope" value="Bacteria"/>
</dbReference>
<dbReference type="HOGENOM" id="CLU_002794_4_1_9"/>
<dbReference type="Proteomes" id="UP000007723">
    <property type="component" value="Chromosome"/>
</dbReference>
<dbReference type="GO" id="GO:0005737">
    <property type="term" value="C:cytoplasm"/>
    <property type="evidence" value="ECO:0007669"/>
    <property type="project" value="UniProtKB-SubCell"/>
</dbReference>
<dbReference type="GO" id="GO:0005525">
    <property type="term" value="F:GTP binding"/>
    <property type="evidence" value="ECO:0007669"/>
    <property type="project" value="UniProtKB-UniRule"/>
</dbReference>
<dbReference type="GO" id="GO:0003924">
    <property type="term" value="F:GTPase activity"/>
    <property type="evidence" value="ECO:0007669"/>
    <property type="project" value="InterPro"/>
</dbReference>
<dbReference type="GO" id="GO:0003746">
    <property type="term" value="F:translation elongation factor activity"/>
    <property type="evidence" value="ECO:0007669"/>
    <property type="project" value="UniProtKB-UniRule"/>
</dbReference>
<dbReference type="GO" id="GO:0032790">
    <property type="term" value="P:ribosome disassembly"/>
    <property type="evidence" value="ECO:0007669"/>
    <property type="project" value="TreeGrafter"/>
</dbReference>
<dbReference type="CDD" id="cd01886">
    <property type="entry name" value="EF-G"/>
    <property type="match status" value="1"/>
</dbReference>
<dbReference type="CDD" id="cd16262">
    <property type="entry name" value="EFG_III"/>
    <property type="match status" value="1"/>
</dbReference>
<dbReference type="CDD" id="cd01434">
    <property type="entry name" value="EFG_mtEFG1_IV"/>
    <property type="match status" value="1"/>
</dbReference>
<dbReference type="CDD" id="cd03713">
    <property type="entry name" value="EFG_mtEFG_C"/>
    <property type="match status" value="1"/>
</dbReference>
<dbReference type="CDD" id="cd04088">
    <property type="entry name" value="EFG_mtEFG_II"/>
    <property type="match status" value="1"/>
</dbReference>
<dbReference type="FunFam" id="2.40.30.10:FF:000006">
    <property type="entry name" value="Elongation factor G"/>
    <property type="match status" value="1"/>
</dbReference>
<dbReference type="FunFam" id="3.30.230.10:FF:000003">
    <property type="entry name" value="Elongation factor G"/>
    <property type="match status" value="1"/>
</dbReference>
<dbReference type="FunFam" id="3.30.70.240:FF:000001">
    <property type="entry name" value="Elongation factor G"/>
    <property type="match status" value="1"/>
</dbReference>
<dbReference type="FunFam" id="3.30.70.870:FF:000001">
    <property type="entry name" value="Elongation factor G"/>
    <property type="match status" value="1"/>
</dbReference>
<dbReference type="FunFam" id="3.40.50.300:FF:000029">
    <property type="entry name" value="Elongation factor G"/>
    <property type="match status" value="1"/>
</dbReference>
<dbReference type="Gene3D" id="3.30.230.10">
    <property type="match status" value="1"/>
</dbReference>
<dbReference type="Gene3D" id="3.30.70.240">
    <property type="match status" value="1"/>
</dbReference>
<dbReference type="Gene3D" id="3.30.70.870">
    <property type="entry name" value="Elongation Factor G (Translational Gtpase), domain 3"/>
    <property type="match status" value="1"/>
</dbReference>
<dbReference type="Gene3D" id="3.40.50.300">
    <property type="entry name" value="P-loop containing nucleotide triphosphate hydrolases"/>
    <property type="match status" value="1"/>
</dbReference>
<dbReference type="Gene3D" id="2.40.30.10">
    <property type="entry name" value="Translation factors"/>
    <property type="match status" value="1"/>
</dbReference>
<dbReference type="HAMAP" id="MF_00054_B">
    <property type="entry name" value="EF_G_EF_2_B"/>
    <property type="match status" value="1"/>
</dbReference>
<dbReference type="InterPro" id="IPR041095">
    <property type="entry name" value="EFG_II"/>
</dbReference>
<dbReference type="InterPro" id="IPR009022">
    <property type="entry name" value="EFG_III"/>
</dbReference>
<dbReference type="InterPro" id="IPR035647">
    <property type="entry name" value="EFG_III/V"/>
</dbReference>
<dbReference type="InterPro" id="IPR047872">
    <property type="entry name" value="EFG_IV"/>
</dbReference>
<dbReference type="InterPro" id="IPR035649">
    <property type="entry name" value="EFG_V"/>
</dbReference>
<dbReference type="InterPro" id="IPR000640">
    <property type="entry name" value="EFG_V-like"/>
</dbReference>
<dbReference type="InterPro" id="IPR004161">
    <property type="entry name" value="EFTu-like_2"/>
</dbReference>
<dbReference type="InterPro" id="IPR031157">
    <property type="entry name" value="G_TR_CS"/>
</dbReference>
<dbReference type="InterPro" id="IPR027417">
    <property type="entry name" value="P-loop_NTPase"/>
</dbReference>
<dbReference type="InterPro" id="IPR020568">
    <property type="entry name" value="Ribosomal_Su5_D2-typ_SF"/>
</dbReference>
<dbReference type="InterPro" id="IPR014721">
    <property type="entry name" value="Ribsml_uS5_D2-typ_fold_subgr"/>
</dbReference>
<dbReference type="InterPro" id="IPR005225">
    <property type="entry name" value="Small_GTP-bd"/>
</dbReference>
<dbReference type="InterPro" id="IPR000795">
    <property type="entry name" value="T_Tr_GTP-bd_dom"/>
</dbReference>
<dbReference type="InterPro" id="IPR009000">
    <property type="entry name" value="Transl_B-barrel_sf"/>
</dbReference>
<dbReference type="InterPro" id="IPR004540">
    <property type="entry name" value="Transl_elong_EFG/EF2"/>
</dbReference>
<dbReference type="InterPro" id="IPR005517">
    <property type="entry name" value="Transl_elong_EFG/EF2_IV"/>
</dbReference>
<dbReference type="NCBIfam" id="TIGR00484">
    <property type="entry name" value="EF-G"/>
    <property type="match status" value="1"/>
</dbReference>
<dbReference type="NCBIfam" id="NF009379">
    <property type="entry name" value="PRK12740.1-3"/>
    <property type="match status" value="1"/>
</dbReference>
<dbReference type="NCBIfam" id="NF009381">
    <property type="entry name" value="PRK12740.1-5"/>
    <property type="match status" value="1"/>
</dbReference>
<dbReference type="NCBIfam" id="NF009891">
    <property type="entry name" value="PRK13351.1-1"/>
    <property type="match status" value="1"/>
</dbReference>
<dbReference type="NCBIfam" id="TIGR00231">
    <property type="entry name" value="small_GTP"/>
    <property type="match status" value="1"/>
</dbReference>
<dbReference type="PANTHER" id="PTHR43261:SF1">
    <property type="entry name" value="RIBOSOME-RELEASING FACTOR 2, MITOCHONDRIAL"/>
    <property type="match status" value="1"/>
</dbReference>
<dbReference type="PANTHER" id="PTHR43261">
    <property type="entry name" value="TRANSLATION ELONGATION FACTOR G-RELATED"/>
    <property type="match status" value="1"/>
</dbReference>
<dbReference type="Pfam" id="PF00679">
    <property type="entry name" value="EFG_C"/>
    <property type="match status" value="1"/>
</dbReference>
<dbReference type="Pfam" id="PF14492">
    <property type="entry name" value="EFG_III"/>
    <property type="match status" value="1"/>
</dbReference>
<dbReference type="Pfam" id="PF03764">
    <property type="entry name" value="EFG_IV"/>
    <property type="match status" value="1"/>
</dbReference>
<dbReference type="Pfam" id="PF00009">
    <property type="entry name" value="GTP_EFTU"/>
    <property type="match status" value="1"/>
</dbReference>
<dbReference type="Pfam" id="PF03144">
    <property type="entry name" value="GTP_EFTU_D2"/>
    <property type="match status" value="1"/>
</dbReference>
<dbReference type="PRINTS" id="PR00315">
    <property type="entry name" value="ELONGATNFCT"/>
</dbReference>
<dbReference type="SMART" id="SM00838">
    <property type="entry name" value="EFG_C"/>
    <property type="match status" value="1"/>
</dbReference>
<dbReference type="SMART" id="SM00889">
    <property type="entry name" value="EFG_IV"/>
    <property type="match status" value="1"/>
</dbReference>
<dbReference type="SUPFAM" id="SSF54980">
    <property type="entry name" value="EF-G C-terminal domain-like"/>
    <property type="match status" value="2"/>
</dbReference>
<dbReference type="SUPFAM" id="SSF52540">
    <property type="entry name" value="P-loop containing nucleoside triphosphate hydrolases"/>
    <property type="match status" value="1"/>
</dbReference>
<dbReference type="SUPFAM" id="SSF54211">
    <property type="entry name" value="Ribosomal protein S5 domain 2-like"/>
    <property type="match status" value="1"/>
</dbReference>
<dbReference type="SUPFAM" id="SSF50447">
    <property type="entry name" value="Translation proteins"/>
    <property type="match status" value="1"/>
</dbReference>
<dbReference type="PROSITE" id="PS00301">
    <property type="entry name" value="G_TR_1"/>
    <property type="match status" value="1"/>
</dbReference>
<dbReference type="PROSITE" id="PS51722">
    <property type="entry name" value="G_TR_2"/>
    <property type="match status" value="1"/>
</dbReference>
<reference key="1">
    <citation type="submission" date="2009-01" db="EMBL/GenBank/DDBJ databases">
        <title>Complete sequence of chromosome of Caldicellulosiruptor becscii DSM 6725.</title>
        <authorList>
            <person name="Lucas S."/>
            <person name="Copeland A."/>
            <person name="Lapidus A."/>
            <person name="Glavina del Rio T."/>
            <person name="Tice H."/>
            <person name="Bruce D."/>
            <person name="Goodwin L."/>
            <person name="Pitluck S."/>
            <person name="Sims D."/>
            <person name="Meincke L."/>
            <person name="Brettin T."/>
            <person name="Detter J.C."/>
            <person name="Han C."/>
            <person name="Larimer F."/>
            <person name="Land M."/>
            <person name="Hauser L."/>
            <person name="Kyrpides N."/>
            <person name="Ovchinnikova G."/>
            <person name="Kataeva I."/>
            <person name="Adams M.W.W."/>
        </authorList>
    </citation>
    <scope>NUCLEOTIDE SEQUENCE [LARGE SCALE GENOMIC DNA]</scope>
    <source>
        <strain>ATCC BAA-1888 / DSM 6725 / KCTC 15123 / Z-1320</strain>
    </source>
</reference>
<comment type="function">
    <text evidence="1">Catalyzes the GTP-dependent ribosomal translocation step during translation elongation. During this step, the ribosome changes from the pre-translocational (PRE) to the post-translocational (POST) state as the newly formed A-site-bound peptidyl-tRNA and P-site-bound deacylated tRNA move to the P and E sites, respectively. Catalyzes the coordinated movement of the two tRNA molecules, the mRNA and conformational changes in the ribosome.</text>
</comment>
<comment type="subcellular location">
    <subcellularLocation>
        <location evidence="1">Cytoplasm</location>
    </subcellularLocation>
</comment>
<comment type="similarity">
    <text evidence="1">Belongs to the TRAFAC class translation factor GTPase superfamily. Classic translation factor GTPase family. EF-G/EF-2 subfamily.</text>
</comment>
<accession>B9MQH0</accession>